<evidence type="ECO:0000255" key="1">
    <source>
        <dbReference type="HAMAP-Rule" id="MF_00177"/>
    </source>
</evidence>
<dbReference type="EC" id="6.1.1.6" evidence="1"/>
<dbReference type="EMBL" id="CP000102">
    <property type="protein sequence ID" value="ABC56665.1"/>
    <property type="molecule type" value="Genomic_DNA"/>
</dbReference>
<dbReference type="RefSeq" id="WP_011405864.1">
    <property type="nucleotide sequence ID" value="NC_007681.1"/>
</dbReference>
<dbReference type="SMR" id="Q2NHG8"/>
<dbReference type="STRING" id="339860.Msp_0249"/>
<dbReference type="GeneID" id="41324822"/>
<dbReference type="KEGG" id="mst:Msp_0249"/>
<dbReference type="eggNOG" id="arCOG00485">
    <property type="taxonomic scope" value="Archaea"/>
</dbReference>
<dbReference type="HOGENOM" id="CLU_025562_1_0_2"/>
<dbReference type="OrthoDB" id="6838at2157"/>
<dbReference type="Proteomes" id="UP000001931">
    <property type="component" value="Chromosome"/>
</dbReference>
<dbReference type="GO" id="GO:0005737">
    <property type="term" value="C:cytoplasm"/>
    <property type="evidence" value="ECO:0007669"/>
    <property type="project" value="UniProtKB-SubCell"/>
</dbReference>
<dbReference type="GO" id="GO:0005524">
    <property type="term" value="F:ATP binding"/>
    <property type="evidence" value="ECO:0007669"/>
    <property type="project" value="UniProtKB-UniRule"/>
</dbReference>
<dbReference type="GO" id="GO:0004824">
    <property type="term" value="F:lysine-tRNA ligase activity"/>
    <property type="evidence" value="ECO:0007669"/>
    <property type="project" value="UniProtKB-UniRule"/>
</dbReference>
<dbReference type="GO" id="GO:0000049">
    <property type="term" value="F:tRNA binding"/>
    <property type="evidence" value="ECO:0007669"/>
    <property type="project" value="InterPro"/>
</dbReference>
<dbReference type="GO" id="GO:0006430">
    <property type="term" value="P:lysyl-tRNA aminoacylation"/>
    <property type="evidence" value="ECO:0007669"/>
    <property type="project" value="UniProtKB-UniRule"/>
</dbReference>
<dbReference type="Gene3D" id="1.10.10.350">
    <property type="match status" value="1"/>
</dbReference>
<dbReference type="Gene3D" id="1.10.10.770">
    <property type="match status" value="1"/>
</dbReference>
<dbReference type="Gene3D" id="3.40.50.620">
    <property type="entry name" value="HUPs"/>
    <property type="match status" value="2"/>
</dbReference>
<dbReference type="HAMAP" id="MF_00177">
    <property type="entry name" value="Lys_tRNA_synth_class1"/>
    <property type="match status" value="1"/>
</dbReference>
<dbReference type="InterPro" id="IPR045462">
    <property type="entry name" value="aa-tRNA-synth_I_cd-bd"/>
</dbReference>
<dbReference type="InterPro" id="IPR020751">
    <property type="entry name" value="aa-tRNA-synth_I_codon-bd_sub2"/>
</dbReference>
<dbReference type="InterPro" id="IPR008925">
    <property type="entry name" value="aa_tRNA-synth_I_cd-bd_sf"/>
</dbReference>
<dbReference type="InterPro" id="IPR002904">
    <property type="entry name" value="Lys-tRNA-ligase"/>
</dbReference>
<dbReference type="InterPro" id="IPR014729">
    <property type="entry name" value="Rossmann-like_a/b/a_fold"/>
</dbReference>
<dbReference type="NCBIfam" id="TIGR00467">
    <property type="entry name" value="lysS_arch"/>
    <property type="match status" value="1"/>
</dbReference>
<dbReference type="PANTHER" id="PTHR37940">
    <property type="entry name" value="LYSINE--TRNA LIGASE"/>
    <property type="match status" value="1"/>
</dbReference>
<dbReference type="PANTHER" id="PTHR37940:SF1">
    <property type="entry name" value="LYSINE--TRNA LIGASE"/>
    <property type="match status" value="1"/>
</dbReference>
<dbReference type="Pfam" id="PF19269">
    <property type="entry name" value="Anticodon_2"/>
    <property type="match status" value="1"/>
</dbReference>
<dbReference type="Pfam" id="PF01921">
    <property type="entry name" value="tRNA-synt_1f"/>
    <property type="match status" value="1"/>
</dbReference>
<dbReference type="SUPFAM" id="SSF48163">
    <property type="entry name" value="An anticodon-binding domain of class I aminoacyl-tRNA synthetases"/>
    <property type="match status" value="1"/>
</dbReference>
<dbReference type="SUPFAM" id="SSF52374">
    <property type="entry name" value="Nucleotidylyl transferase"/>
    <property type="match status" value="1"/>
</dbReference>
<protein>
    <recommendedName>
        <fullName evidence="1">Lysine--tRNA ligase</fullName>
        <ecNumber evidence="1">6.1.1.6</ecNumber>
    </recommendedName>
    <alternativeName>
        <fullName evidence="1">Lysyl-tRNA synthetase</fullName>
        <shortName evidence="1">LysRS</shortName>
    </alternativeName>
</protein>
<sequence length="529" mass="61587">MSKHWTERIAEELSQQKKDEYIIGSGTSISGSVHIGNSCDIFIANAVSKELRKIGENAKTVWIADDYDPLRKVPYPLPENYSKYLGQPYYEIPCPEGCCENFVEHFQKPFVNSLKPFDIENLEIKSGAQMYKNGVYTEATKVALENTERIREIFNEYREHPLSEDWLPYNAICSECGRVNTTHAYDFEGTNIKYKCDCGHEGEVDYTTGMGKLTWRVEWAARWKILNITCEPFGKDHAASGGSYDVSKIISDEIFNYPAPYPVPYEWITLDGDAMSKSKGVFFSPEAWLKIGKPETLNYYIFRNKPLKPKDFTPKMGFLDLMDQYDRVERIAYGQEEASNEKEKEKLTKIYEVSQINDMPDEMPFQPSYRFLTVAYQIANGNANKIYTILKNNNQLPERLENVTFEDLSEFDRDTFLQRIEYVHNWLETYGPKFVKFQVMNKMPRIEITDEQKEFLKQIANILESETFENDVQFHDRMYEVLESLGMKPQKAFQAIYKTIIGKKQGPRAASFVLSLDKDFVIKRFRLEE</sequence>
<feature type="chain" id="PRO_1000199267" description="Lysine--tRNA ligase">
    <location>
        <begin position="1"/>
        <end position="529"/>
    </location>
</feature>
<feature type="short sequence motif" description="'HIGH' region">
    <location>
        <begin position="29"/>
        <end position="37"/>
    </location>
</feature>
<feature type="short sequence motif" description="'KMSKS' region">
    <location>
        <begin position="274"/>
        <end position="278"/>
    </location>
</feature>
<feature type="binding site" evidence="1">
    <location>
        <position position="277"/>
    </location>
    <ligand>
        <name>ATP</name>
        <dbReference type="ChEBI" id="CHEBI:30616"/>
    </ligand>
</feature>
<reference key="1">
    <citation type="journal article" date="2006" name="J. Bacteriol.">
        <title>The genome sequence of Methanosphaera stadtmanae reveals why this human intestinal archaeon is restricted to methanol and H2 for methane formation and ATP synthesis.</title>
        <authorList>
            <person name="Fricke W.F."/>
            <person name="Seedorf H."/>
            <person name="Henne A."/>
            <person name="Kruer M."/>
            <person name="Liesegang H."/>
            <person name="Hedderich R."/>
            <person name="Gottschalk G."/>
            <person name="Thauer R.K."/>
        </authorList>
    </citation>
    <scope>NUCLEOTIDE SEQUENCE [LARGE SCALE GENOMIC DNA]</scope>
    <source>
        <strain>ATCC 43021 / DSM 3091 / JCM 11832 / MCB-3</strain>
    </source>
</reference>
<comment type="catalytic activity">
    <reaction evidence="1">
        <text>tRNA(Lys) + L-lysine + ATP = L-lysyl-tRNA(Lys) + AMP + diphosphate</text>
        <dbReference type="Rhea" id="RHEA:20792"/>
        <dbReference type="Rhea" id="RHEA-COMP:9696"/>
        <dbReference type="Rhea" id="RHEA-COMP:9697"/>
        <dbReference type="ChEBI" id="CHEBI:30616"/>
        <dbReference type="ChEBI" id="CHEBI:32551"/>
        <dbReference type="ChEBI" id="CHEBI:33019"/>
        <dbReference type="ChEBI" id="CHEBI:78442"/>
        <dbReference type="ChEBI" id="CHEBI:78529"/>
        <dbReference type="ChEBI" id="CHEBI:456215"/>
        <dbReference type="EC" id="6.1.1.6"/>
    </reaction>
</comment>
<comment type="subcellular location">
    <subcellularLocation>
        <location evidence="1">Cytoplasm</location>
    </subcellularLocation>
</comment>
<comment type="similarity">
    <text evidence="1">Belongs to the class-I aminoacyl-tRNA synthetase family.</text>
</comment>
<keyword id="KW-0030">Aminoacyl-tRNA synthetase</keyword>
<keyword id="KW-0067">ATP-binding</keyword>
<keyword id="KW-0963">Cytoplasm</keyword>
<keyword id="KW-0436">Ligase</keyword>
<keyword id="KW-0547">Nucleotide-binding</keyword>
<keyword id="KW-0648">Protein biosynthesis</keyword>
<keyword id="KW-1185">Reference proteome</keyword>
<proteinExistence type="inferred from homology"/>
<name>SYK_METST</name>
<organism>
    <name type="scientific">Methanosphaera stadtmanae (strain ATCC 43021 / DSM 3091 / JCM 11832 / MCB-3)</name>
    <dbReference type="NCBI Taxonomy" id="339860"/>
    <lineage>
        <taxon>Archaea</taxon>
        <taxon>Methanobacteriati</taxon>
        <taxon>Methanobacteriota</taxon>
        <taxon>Methanomada group</taxon>
        <taxon>Methanobacteria</taxon>
        <taxon>Methanobacteriales</taxon>
        <taxon>Methanobacteriaceae</taxon>
        <taxon>Methanosphaera</taxon>
    </lineage>
</organism>
<gene>
    <name evidence="1" type="primary">lysS</name>
    <name type="ordered locus">Msp_0249</name>
</gene>
<accession>Q2NHG8</accession>